<keyword id="KW-0507">mRNA processing</keyword>
<keyword id="KW-0508">mRNA splicing</keyword>
<keyword id="KW-0539">Nucleus</keyword>
<keyword id="KW-1185">Reference proteome</keyword>
<keyword id="KW-0747">Spliceosome</keyword>
<accession>Q4PGM6</accession>
<accession>A0A0D1EDQ2</accession>
<gene>
    <name type="primary">RSE1</name>
    <name type="ORF">UMAG_00737</name>
</gene>
<proteinExistence type="inferred from homology"/>
<feature type="chain" id="PRO_0000218636" description="Pre-mRNA-splicing factor RSE1">
    <location>
        <begin position="1"/>
        <end position="1221"/>
    </location>
</feature>
<name>RSE1_MYCMD</name>
<protein>
    <recommendedName>
        <fullName>Pre-mRNA-splicing factor RSE1</fullName>
    </recommendedName>
</protein>
<dbReference type="EMBL" id="CM003140">
    <property type="protein sequence ID" value="KIS72330.1"/>
    <property type="molecule type" value="Genomic_DNA"/>
</dbReference>
<dbReference type="RefSeq" id="XP_011386519.1">
    <property type="nucleotide sequence ID" value="XM_011388217.1"/>
</dbReference>
<dbReference type="SMR" id="Q4PGM6"/>
<dbReference type="FunCoup" id="Q4PGM6">
    <property type="interactions" value="1053"/>
</dbReference>
<dbReference type="STRING" id="237631.Q4PGM6"/>
<dbReference type="EnsemblFungi" id="KIS72330">
    <property type="protein sequence ID" value="KIS72330"/>
    <property type="gene ID" value="UMAG_00737"/>
</dbReference>
<dbReference type="GeneID" id="23561952"/>
<dbReference type="KEGG" id="uma:UMAG_00737"/>
<dbReference type="VEuPathDB" id="FungiDB:UMAG_00737"/>
<dbReference type="eggNOG" id="KOG1898">
    <property type="taxonomic scope" value="Eukaryota"/>
</dbReference>
<dbReference type="HOGENOM" id="CLU_003246_0_0_1"/>
<dbReference type="InParanoid" id="Q4PGM6"/>
<dbReference type="OMA" id="PRATGHW"/>
<dbReference type="OrthoDB" id="436637at2759"/>
<dbReference type="Proteomes" id="UP000000561">
    <property type="component" value="Chromosome 1"/>
</dbReference>
<dbReference type="GO" id="GO:0005634">
    <property type="term" value="C:nucleus"/>
    <property type="evidence" value="ECO:0000318"/>
    <property type="project" value="GO_Central"/>
</dbReference>
<dbReference type="GO" id="GO:0005681">
    <property type="term" value="C:spliceosomal complex"/>
    <property type="evidence" value="ECO:0007669"/>
    <property type="project" value="UniProtKB-KW"/>
</dbReference>
<dbReference type="GO" id="GO:0005686">
    <property type="term" value="C:U2 snRNP"/>
    <property type="evidence" value="ECO:0000318"/>
    <property type="project" value="GO_Central"/>
</dbReference>
<dbReference type="GO" id="GO:0030620">
    <property type="term" value="F:U2 snRNA binding"/>
    <property type="evidence" value="ECO:0000318"/>
    <property type="project" value="GO_Central"/>
</dbReference>
<dbReference type="GO" id="GO:0000398">
    <property type="term" value="P:mRNA splicing, via spliceosome"/>
    <property type="evidence" value="ECO:0000318"/>
    <property type="project" value="GO_Central"/>
</dbReference>
<dbReference type="FunFam" id="2.130.10.10:FF:001143">
    <property type="entry name" value="Pre-mRNA-splicing factor rse-1, putative"/>
    <property type="match status" value="1"/>
</dbReference>
<dbReference type="FunFam" id="2.130.10.10:FF:000068">
    <property type="entry name" value="Pre-mRNA-splicing factor rse1, variant"/>
    <property type="match status" value="1"/>
</dbReference>
<dbReference type="Gene3D" id="1.10.150.910">
    <property type="match status" value="1"/>
</dbReference>
<dbReference type="Gene3D" id="2.130.10.10">
    <property type="entry name" value="YVTN repeat-like/Quinoprotein amine dehydrogenase"/>
    <property type="match status" value="3"/>
</dbReference>
<dbReference type="InterPro" id="IPR018846">
    <property type="entry name" value="Beta-prop_RSE1/DDB1/CPSF1_1st"/>
</dbReference>
<dbReference type="InterPro" id="IPR004871">
    <property type="entry name" value="Cleavage/polyA-sp_fac_asu_C"/>
</dbReference>
<dbReference type="InterPro" id="IPR050358">
    <property type="entry name" value="RSE1/DDB1/CFT1/CPSF1"/>
</dbReference>
<dbReference type="InterPro" id="IPR015943">
    <property type="entry name" value="WD40/YVTN_repeat-like_dom_sf"/>
</dbReference>
<dbReference type="InterPro" id="IPR036322">
    <property type="entry name" value="WD40_repeat_dom_sf"/>
</dbReference>
<dbReference type="PANTHER" id="PTHR10644">
    <property type="entry name" value="DNA REPAIR/RNA PROCESSING CPSF FAMILY"/>
    <property type="match status" value="1"/>
</dbReference>
<dbReference type="Pfam" id="PF10433">
    <property type="entry name" value="Beta-prop_RSE1_1st"/>
    <property type="match status" value="1"/>
</dbReference>
<dbReference type="Pfam" id="PF23726">
    <property type="entry name" value="Beta-prop_RSE1_2nd"/>
    <property type="match status" value="1"/>
</dbReference>
<dbReference type="Pfam" id="PF03178">
    <property type="entry name" value="CPSF_A"/>
    <property type="match status" value="1"/>
</dbReference>
<dbReference type="SUPFAM" id="SSF50978">
    <property type="entry name" value="WD40 repeat-like"/>
    <property type="match status" value="1"/>
</dbReference>
<evidence type="ECO:0000250" key="1"/>
<evidence type="ECO:0000305" key="2"/>
<sequence length="1221" mass="134243">MDGMYLYNLTLQASGSVNATVVGQFSGTRQQEIIVAKGSRLELLRPDTQTGKVDTVLSHDAFGVIRSLAAFRLTGGSKDYVIVGSDSGRIVILEYQPKTNSLEKVHQETFGRSGSRRIVPGQYLATDPKGRATMIGAMEKAMLVYILNRDAQANLTISSPLEAHRPSAIIHHIVGVDVGFENPLFACLEVDYSDSDHDPSGRAFEEAAKTLTYYELDLGLNHVVRKWSEPVDPRSNLLVQVPGGYNQNLEKWDGPSGVLVCSEDYITYKHQDQPEHRVPIPKRLNPVEKLSERRGTLIVASVLHKMKNAFFFLVQTEDGDLFKITMEHQDDEIRSLKIKYFDTVPVASGLVILRSGFLFVASEYGAQLLYSFQKLGDDDDLPEYISTDYDENGAGRRRPQLPTFTPRPLDNLVQVDEMPSLDPILDAKPLNPLAADSPQIFAACGRGARSSFKMLRHGLEVQEAVSSDLPGVPSAVWTTKITQQDEYDSYIILSFVNGTLVLSIGETIEEVSDSGFLTSSSTLAVQQLGQDALLQVHPHGIRHVLVDKQINEWATPSLPNGRQTTIVATCTNERQVVVALSSNELVYFELDMDGQLNEYQERKAMGAGVLTMSMPDCPEGRQRTPYLAVGCDDSTVRIISLEPNSTLASISIQALTAPASSICMAEMLDATIDRNHATTFVNIGLQNGVLLRTILDAVTGQLTDTRTRFLGSKAVRLIRTKVHGQAAVMALSTRTWLSYTYQDRLQFVPLIFDVLDHAWSFSAELCPEGLIGIVGSTLRIFTIPSLASKLKQDSVALSYTPRKIANHPNEQGLFYVVEAEHRTLSPGAQRRRTEMLGKELKPHQRGVLDLNPAEFGAIRAEAGNWASCIRAVDGVQAQTTHRLEMDDNEAAFSIAVVPFASAEKEVMLVVGSAVDVVLSPRSCKKAYLTTYRLLDNGRELELLHKTEVDDIPLVLRAFQGRLLAGIGKALRIYDLGKKKLLRKCENRSFPTAVVSLDAQGSRIVVGDMQESIIFASYKPLENRLVTFADDVMPKFVTRCTMLDYDTVAAADKFGNIYVLRLDGNTSRSVDEDPTGMTIVHEKPVLMGAAHKASLVAHFFVGDIITSLHRTAMVAGGREVLLYTGLSGSIGALVPFVSKEDVDTLSTLESHLRQENNSIVGRDHLAYRSSYAPVKSVIDGDLCETFGLLSPAKQNAIAGELDRKPGEINKKLAQLREGATGF</sequence>
<organism>
    <name type="scientific">Mycosarcoma maydis</name>
    <name type="common">Corn smut fungus</name>
    <name type="synonym">Ustilago maydis</name>
    <dbReference type="NCBI Taxonomy" id="5270"/>
    <lineage>
        <taxon>Eukaryota</taxon>
        <taxon>Fungi</taxon>
        <taxon>Dikarya</taxon>
        <taxon>Basidiomycota</taxon>
        <taxon>Ustilaginomycotina</taxon>
        <taxon>Ustilaginomycetes</taxon>
        <taxon>Ustilaginales</taxon>
        <taxon>Ustilaginaceae</taxon>
        <taxon>Mycosarcoma</taxon>
    </lineage>
</organism>
<comment type="function">
    <text evidence="1">Involved in pre-mRNA splicing and cell cycle control.</text>
</comment>
<comment type="subunit">
    <text evidence="1">Associated with the spliceosome.</text>
</comment>
<comment type="subcellular location">
    <subcellularLocation>
        <location evidence="1">Nucleus</location>
    </subcellularLocation>
</comment>
<comment type="similarity">
    <text evidence="2">Belongs to the RSE1 family.</text>
</comment>
<reference key="1">
    <citation type="journal article" date="2006" name="Nature">
        <title>Insights from the genome of the biotrophic fungal plant pathogen Ustilago maydis.</title>
        <authorList>
            <person name="Kaemper J."/>
            <person name="Kahmann R."/>
            <person name="Boelker M."/>
            <person name="Ma L.-J."/>
            <person name="Brefort T."/>
            <person name="Saville B.J."/>
            <person name="Banuett F."/>
            <person name="Kronstad J.W."/>
            <person name="Gold S.E."/>
            <person name="Mueller O."/>
            <person name="Perlin M.H."/>
            <person name="Woesten H.A.B."/>
            <person name="de Vries R."/>
            <person name="Ruiz-Herrera J."/>
            <person name="Reynaga-Pena C.G."/>
            <person name="Snetselaar K."/>
            <person name="McCann M."/>
            <person name="Perez-Martin J."/>
            <person name="Feldbruegge M."/>
            <person name="Basse C.W."/>
            <person name="Steinberg G."/>
            <person name="Ibeas J.I."/>
            <person name="Holloman W."/>
            <person name="Guzman P."/>
            <person name="Farman M.L."/>
            <person name="Stajich J.E."/>
            <person name="Sentandreu R."/>
            <person name="Gonzalez-Prieto J.M."/>
            <person name="Kennell J.C."/>
            <person name="Molina L."/>
            <person name="Schirawski J."/>
            <person name="Mendoza-Mendoza A."/>
            <person name="Greilinger D."/>
            <person name="Muench K."/>
            <person name="Roessel N."/>
            <person name="Scherer M."/>
            <person name="Vranes M."/>
            <person name="Ladendorf O."/>
            <person name="Vincon V."/>
            <person name="Fuchs U."/>
            <person name="Sandrock B."/>
            <person name="Meng S."/>
            <person name="Ho E.C.H."/>
            <person name="Cahill M.J."/>
            <person name="Boyce K.J."/>
            <person name="Klose J."/>
            <person name="Klosterman S.J."/>
            <person name="Deelstra H.J."/>
            <person name="Ortiz-Castellanos L."/>
            <person name="Li W."/>
            <person name="Sanchez-Alonso P."/>
            <person name="Schreier P.H."/>
            <person name="Haeuser-Hahn I."/>
            <person name="Vaupel M."/>
            <person name="Koopmann E."/>
            <person name="Friedrich G."/>
            <person name="Voss H."/>
            <person name="Schlueter T."/>
            <person name="Margolis J."/>
            <person name="Platt D."/>
            <person name="Swimmer C."/>
            <person name="Gnirke A."/>
            <person name="Chen F."/>
            <person name="Vysotskaia V."/>
            <person name="Mannhaupt G."/>
            <person name="Gueldener U."/>
            <person name="Muensterkoetter M."/>
            <person name="Haase D."/>
            <person name="Oesterheld M."/>
            <person name="Mewes H.-W."/>
            <person name="Mauceli E.W."/>
            <person name="DeCaprio D."/>
            <person name="Wade C.M."/>
            <person name="Butler J."/>
            <person name="Young S.K."/>
            <person name="Jaffe D.B."/>
            <person name="Calvo S.E."/>
            <person name="Nusbaum C."/>
            <person name="Galagan J.E."/>
            <person name="Birren B.W."/>
        </authorList>
    </citation>
    <scope>NUCLEOTIDE SEQUENCE [LARGE SCALE GENOMIC DNA]</scope>
    <source>
        <strain>DSM 14603 / FGSC 9021 / UM521</strain>
    </source>
</reference>
<reference key="2">
    <citation type="submission" date="2014-09" db="EMBL/GenBank/DDBJ databases">
        <authorList>
            <person name="Gueldener U."/>
            <person name="Muensterkoetter M."/>
            <person name="Walter M.C."/>
            <person name="Mannhaupt G."/>
            <person name="Kahmann R."/>
        </authorList>
    </citation>
    <scope>GENOME REANNOTATION</scope>
    <source>
        <strain>DSM 14603 / FGSC 9021 / UM521</strain>
    </source>
</reference>